<keyword id="KW-0472">Membrane</keyword>
<keyword id="KW-1185">Reference proteome</keyword>
<keyword id="KW-0812">Transmembrane</keyword>
<keyword id="KW-1133">Transmembrane helix</keyword>
<proteinExistence type="evidence at transcript level"/>
<evidence type="ECO:0000255" key="1"/>
<evidence type="ECO:0000305" key="2"/>
<reference key="1">
    <citation type="journal article" date="2004" name="Genome Res.">
        <title>The status, quality, and expansion of the NIH full-length cDNA project: the Mammalian Gene Collection (MGC).</title>
        <authorList>
            <consortium name="The MGC Project Team"/>
        </authorList>
    </citation>
    <scope>NUCLEOTIDE SEQUENCE [LARGE SCALE MRNA]</scope>
    <source>
        <tissue>Testis</tissue>
    </source>
</reference>
<comment type="subcellular location">
    <subcellularLocation>
        <location evidence="2">Membrane</location>
        <topology evidence="2">Multi-pass membrane protein</topology>
    </subcellularLocation>
</comment>
<organism>
    <name type="scientific">Rattus norvegicus</name>
    <name type="common">Rat</name>
    <dbReference type="NCBI Taxonomy" id="10116"/>
    <lineage>
        <taxon>Eukaryota</taxon>
        <taxon>Metazoa</taxon>
        <taxon>Chordata</taxon>
        <taxon>Craniata</taxon>
        <taxon>Vertebrata</taxon>
        <taxon>Euteleostomi</taxon>
        <taxon>Mammalia</taxon>
        <taxon>Eutheria</taxon>
        <taxon>Euarchontoglires</taxon>
        <taxon>Glires</taxon>
        <taxon>Rodentia</taxon>
        <taxon>Myomorpha</taxon>
        <taxon>Muroidea</taxon>
        <taxon>Muridae</taxon>
        <taxon>Murinae</taxon>
        <taxon>Rattus</taxon>
    </lineage>
</organism>
<sequence>MHAWDPPASLSRALPLASSVLMLLLSCLWLLGAGPSLRLAPELLTEPWQVHRLLTHALGHTALPGLLLSLLLLPTLGWWQECHLGTLRFLHNSAVLALATGLLAVLLAGLGLSSAAGGCGYMPVHLAMLAGQSYYPGWPQRTLPPWLLPWLLLALTLLLSSEPPFLQLLCGLLAGLAYAAGAFRWLELSERRLQVLQEGVLCRTLAGCWPLKLLPTPGSLGELPVTYPAGVRPATPRPPYLASSSSWPHTDGFAQLPPGLGPGQLTWKNSERDLDWAGPSFASATPMWAALDEQMLQEGIQASLLDVSVQGSQNTLWSPKPSVSSLRLQQLQHMGFPTEQAAVALAATGRVEGAVSLLVEGLVDTEALVTEERSGPAHCKDTGVS</sequence>
<dbReference type="EMBL" id="BC081912">
    <property type="protein sequence ID" value="AAH81912.1"/>
    <property type="molecule type" value="mRNA"/>
</dbReference>
<dbReference type="RefSeq" id="NP_001013897.1">
    <property type="nucleotide sequence ID" value="NM_001013875.1"/>
</dbReference>
<dbReference type="RefSeq" id="XP_006251266.1">
    <property type="nucleotide sequence ID" value="XM_006251204.5"/>
</dbReference>
<dbReference type="RefSeq" id="XP_006251267.1">
    <property type="nucleotide sequence ID" value="XM_006251205.4"/>
</dbReference>
<dbReference type="RefSeq" id="XP_006251268.1">
    <property type="nucleotide sequence ID" value="XM_006251206.5"/>
</dbReference>
<dbReference type="RefSeq" id="XP_006251269.1">
    <property type="nucleotide sequence ID" value="XM_006251207.4"/>
</dbReference>
<dbReference type="RefSeq" id="XP_006251270.1">
    <property type="nucleotide sequence ID" value="XM_006251208.5"/>
</dbReference>
<dbReference type="RefSeq" id="XP_006251271.1">
    <property type="nucleotide sequence ID" value="XM_006251209.3"/>
</dbReference>
<dbReference type="RefSeq" id="XP_006251272.1">
    <property type="nucleotide sequence ID" value="XM_006251210.3"/>
</dbReference>
<dbReference type="RefSeq" id="XP_038947666.1">
    <property type="nucleotide sequence ID" value="XM_039091738.2"/>
</dbReference>
<dbReference type="RefSeq" id="XP_038947668.1">
    <property type="nucleotide sequence ID" value="XM_039091740.2"/>
</dbReference>
<dbReference type="RefSeq" id="XP_063129018.1">
    <property type="nucleotide sequence ID" value="XM_063272948.1"/>
</dbReference>
<dbReference type="SMR" id="Q642B3"/>
<dbReference type="FunCoup" id="Q642B3">
    <property type="interactions" value="834"/>
</dbReference>
<dbReference type="STRING" id="10116.ENSRNOP00000032424"/>
<dbReference type="GlyGen" id="Q642B3">
    <property type="glycosylation" value="1 site"/>
</dbReference>
<dbReference type="PhosphoSitePlus" id="Q642B3"/>
<dbReference type="PaxDb" id="10116-ENSRNOP00000032424"/>
<dbReference type="Ensembl" id="ENSRNOT00000031914.6">
    <property type="protein sequence ID" value="ENSRNOP00000032424.4"/>
    <property type="gene ID" value="ENSRNOG00000027032.6"/>
</dbReference>
<dbReference type="GeneID" id="289753"/>
<dbReference type="KEGG" id="rno:289753"/>
<dbReference type="UCSC" id="RGD:1311827">
    <property type="organism name" value="rat"/>
</dbReference>
<dbReference type="AGR" id="RGD:1311827"/>
<dbReference type="CTD" id="25807"/>
<dbReference type="RGD" id="1311827">
    <property type="gene designation" value="Rhbdd3"/>
</dbReference>
<dbReference type="eggNOG" id="KOG2632">
    <property type="taxonomic scope" value="Eukaryota"/>
</dbReference>
<dbReference type="GeneTree" id="ENSGT00390000013711"/>
<dbReference type="HOGENOM" id="CLU_060547_0_0_1"/>
<dbReference type="InParanoid" id="Q642B3"/>
<dbReference type="OMA" id="CIGHNYH"/>
<dbReference type="OrthoDB" id="9908508at2759"/>
<dbReference type="PhylomeDB" id="Q642B3"/>
<dbReference type="TreeFam" id="TF332785"/>
<dbReference type="PRO" id="PR:Q642B3"/>
<dbReference type="Proteomes" id="UP000002494">
    <property type="component" value="Chromosome 14"/>
</dbReference>
<dbReference type="Bgee" id="ENSRNOG00000027032">
    <property type="expression patterns" value="Expressed in testis and 20 other cell types or tissues"/>
</dbReference>
<dbReference type="GO" id="GO:0016020">
    <property type="term" value="C:membrane"/>
    <property type="evidence" value="ECO:0007669"/>
    <property type="project" value="UniProtKB-SubCell"/>
</dbReference>
<dbReference type="GO" id="GO:0004252">
    <property type="term" value="F:serine-type endopeptidase activity"/>
    <property type="evidence" value="ECO:0000318"/>
    <property type="project" value="GO_Central"/>
</dbReference>
<dbReference type="GO" id="GO:0001889">
    <property type="term" value="P:liver development"/>
    <property type="evidence" value="ECO:0000266"/>
    <property type="project" value="RGD"/>
</dbReference>
<dbReference type="GO" id="GO:0000165">
    <property type="term" value="P:MAPK cascade"/>
    <property type="evidence" value="ECO:0000266"/>
    <property type="project" value="RGD"/>
</dbReference>
<dbReference type="GO" id="GO:0032815">
    <property type="term" value="P:negative regulation of natural killer cell activation"/>
    <property type="evidence" value="ECO:0000266"/>
    <property type="project" value="RGD"/>
</dbReference>
<dbReference type="GO" id="GO:0045732">
    <property type="term" value="P:positive regulation of protein catabolic process"/>
    <property type="evidence" value="ECO:0000266"/>
    <property type="project" value="RGD"/>
</dbReference>
<dbReference type="GO" id="GO:0002673">
    <property type="term" value="P:regulation of acute inflammatory response"/>
    <property type="evidence" value="ECO:0000266"/>
    <property type="project" value="RGD"/>
</dbReference>
<dbReference type="GO" id="GO:0050708">
    <property type="term" value="P:regulation of protein secretion"/>
    <property type="evidence" value="ECO:0000266"/>
    <property type="project" value="RGD"/>
</dbReference>
<dbReference type="GO" id="GO:0009410">
    <property type="term" value="P:response to xenobiotic stimulus"/>
    <property type="evidence" value="ECO:0000266"/>
    <property type="project" value="RGD"/>
</dbReference>
<dbReference type="Gene3D" id="1.10.8.10">
    <property type="entry name" value="DNA helicase RuvA subunit, C-terminal domain"/>
    <property type="match status" value="1"/>
</dbReference>
<dbReference type="Gene3D" id="1.20.1540.10">
    <property type="entry name" value="Rhomboid-like"/>
    <property type="match status" value="1"/>
</dbReference>
<dbReference type="InterPro" id="IPR022764">
    <property type="entry name" value="Peptidase_S54_rhomboid_dom"/>
</dbReference>
<dbReference type="InterPro" id="IPR035952">
    <property type="entry name" value="Rhomboid-like_sf"/>
</dbReference>
<dbReference type="InterPro" id="IPR015940">
    <property type="entry name" value="UBA"/>
</dbReference>
<dbReference type="InterPro" id="IPR009060">
    <property type="entry name" value="UBA-like_sf"/>
</dbReference>
<dbReference type="PANTHER" id="PTHR43066:SF16">
    <property type="entry name" value="RHOMBOID DOMAIN-CONTAINING PROTEIN 3"/>
    <property type="match status" value="1"/>
</dbReference>
<dbReference type="PANTHER" id="PTHR43066">
    <property type="entry name" value="RHOMBOID-RELATED PROTEIN"/>
    <property type="match status" value="1"/>
</dbReference>
<dbReference type="Pfam" id="PF01694">
    <property type="entry name" value="Rhomboid"/>
    <property type="match status" value="1"/>
</dbReference>
<dbReference type="Pfam" id="PF00627">
    <property type="entry name" value="UBA"/>
    <property type="match status" value="1"/>
</dbReference>
<dbReference type="SUPFAM" id="SSF144091">
    <property type="entry name" value="Rhomboid-like"/>
    <property type="match status" value="1"/>
</dbReference>
<dbReference type="SUPFAM" id="SSF46934">
    <property type="entry name" value="UBA-like"/>
    <property type="match status" value="1"/>
</dbReference>
<gene>
    <name type="primary">Rhbdd3</name>
</gene>
<accession>Q642B3</accession>
<feature type="chain" id="PRO_0000079571" description="Rhomboid domain-containing protein 3">
    <location>
        <begin position="1"/>
        <end position="385"/>
    </location>
</feature>
<feature type="transmembrane region" description="Helical" evidence="1">
    <location>
        <begin position="13"/>
        <end position="33"/>
    </location>
</feature>
<feature type="transmembrane region" description="Helical" evidence="1">
    <location>
        <begin position="58"/>
        <end position="78"/>
    </location>
</feature>
<feature type="transmembrane region" description="Helical" evidence="1">
    <location>
        <begin position="93"/>
        <end position="113"/>
    </location>
</feature>
<feature type="transmembrane region" description="Helical" evidence="1">
    <location>
        <begin position="146"/>
        <end position="166"/>
    </location>
</feature>
<feature type="transmembrane region" description="Helical" evidence="1">
    <location>
        <begin position="168"/>
        <end position="188"/>
    </location>
</feature>
<feature type="domain" description="UBA">
    <location>
        <begin position="322"/>
        <end position="361"/>
    </location>
</feature>
<protein>
    <recommendedName>
        <fullName>Rhomboid domain-containing protein 3</fullName>
    </recommendedName>
</protein>
<name>RHBD3_RAT</name>